<name>EPHA_MYCTU</name>
<sequence length="322" mass="35097">MGAPTERLVDTNGVRLRVVEAGEPGAPVVILAHGFPELAYSWRHQIPALADAGYHVLAPDQRGYGGSSRPEAIEAYDIHRLTADLVGLLDDVGAERAVWVGHDWGAVVVWNAPLLHADRVAAVAALSVPALPRAQVPPTQAFRSRFGENFFYILYFQEPGIADAELNGDPARTMRRMIGGLRPPGDQSAAMRMLAPGPDGFIDRLPEPAGLPAWISQEELDHYIGEFTRTGFTGGLNWYRNFDRNWETTADLAGKTISVPSLFIAGTADPVLTFTRTDRAAEVISGPYREVLIDGAGHWLQQERPGEVTAALLEFLTGLELR</sequence>
<organism>
    <name type="scientific">Mycobacterium tuberculosis (strain ATCC 25618 / H37Rv)</name>
    <dbReference type="NCBI Taxonomy" id="83332"/>
    <lineage>
        <taxon>Bacteria</taxon>
        <taxon>Bacillati</taxon>
        <taxon>Actinomycetota</taxon>
        <taxon>Actinomycetes</taxon>
        <taxon>Mycobacteriales</taxon>
        <taxon>Mycobacteriaceae</taxon>
        <taxon>Mycobacterium</taxon>
        <taxon>Mycobacterium tuberculosis complex</taxon>
    </lineage>
</organism>
<keyword id="KW-0216">Detoxification</keyword>
<keyword id="KW-0378">Hydrolase</keyword>
<keyword id="KW-1185">Reference proteome</keyword>
<protein>
    <recommendedName>
        <fullName evidence="3">Epoxide hydrolase A</fullName>
        <shortName evidence="3">EHB</shortName>
        <ecNumber evidence="1">3.3.2.10</ecNumber>
    </recommendedName>
    <alternativeName>
        <fullName evidence="3">Epoxide hydrolase EphA</fullName>
    </alternativeName>
</protein>
<accession>I6YGS0</accession>
<comment type="function">
    <text evidence="5">Could be involved in detoxification of extraneous host-cell epoxides. Catalyzes the hydrolysis of epoxide-containing substrates.</text>
</comment>
<comment type="catalytic activity">
    <reaction evidence="1">
        <text>an epoxide + H2O = an ethanediol</text>
        <dbReference type="Rhea" id="RHEA:19037"/>
        <dbReference type="ChEBI" id="CHEBI:15377"/>
        <dbReference type="ChEBI" id="CHEBI:32955"/>
        <dbReference type="ChEBI" id="CHEBI:140594"/>
        <dbReference type="EC" id="3.3.2.10"/>
    </reaction>
</comment>
<comment type="subunit">
    <text evidence="1">Homodimer.</text>
</comment>
<comment type="similarity">
    <text evidence="4">Belongs to the AB hydrolase superfamily. Epoxide hydrolase family.</text>
</comment>
<dbReference type="EC" id="3.3.2.10" evidence="1"/>
<dbReference type="EMBL" id="AL123456">
    <property type="protein sequence ID" value="CCP46440.1"/>
    <property type="molecule type" value="Genomic_DNA"/>
</dbReference>
<dbReference type="RefSeq" id="NP_218134.1">
    <property type="nucleotide sequence ID" value="NC_000962.3"/>
</dbReference>
<dbReference type="RefSeq" id="WP_003899600.1">
    <property type="nucleotide sequence ID" value="NZ_NVQJ01000056.1"/>
</dbReference>
<dbReference type="SMR" id="I6YGS0"/>
<dbReference type="FunCoup" id="I6YGS0">
    <property type="interactions" value="236"/>
</dbReference>
<dbReference type="STRING" id="83332.Rv3617"/>
<dbReference type="ESTHER" id="myctu-ephA">
    <property type="family name" value="Epoxide_hydrolase"/>
</dbReference>
<dbReference type="MEROPS" id="S33.973"/>
<dbReference type="PaxDb" id="83332-Rv3617"/>
<dbReference type="DNASU" id="885769"/>
<dbReference type="GeneID" id="45427603"/>
<dbReference type="GeneID" id="885769"/>
<dbReference type="KEGG" id="mtu:Rv3617"/>
<dbReference type="KEGG" id="mtv:RVBD_3617"/>
<dbReference type="PATRIC" id="fig|83332.111.peg.4023"/>
<dbReference type="TubercuList" id="Rv3617"/>
<dbReference type="eggNOG" id="COG2267">
    <property type="taxonomic scope" value="Bacteria"/>
</dbReference>
<dbReference type="HOGENOM" id="CLU_020336_7_2_11"/>
<dbReference type="InParanoid" id="I6YGS0"/>
<dbReference type="OrthoDB" id="2987348at2"/>
<dbReference type="PhylomeDB" id="I6YGS0"/>
<dbReference type="Proteomes" id="UP000001584">
    <property type="component" value="Chromosome"/>
</dbReference>
<dbReference type="GO" id="GO:0004301">
    <property type="term" value="F:epoxide hydrolase activity"/>
    <property type="evidence" value="ECO:0000250"/>
    <property type="project" value="UniProtKB"/>
</dbReference>
<dbReference type="GO" id="GO:0016787">
    <property type="term" value="F:hydrolase activity"/>
    <property type="evidence" value="ECO:0000318"/>
    <property type="project" value="GO_Central"/>
</dbReference>
<dbReference type="GO" id="GO:0042803">
    <property type="term" value="F:protein homodimerization activity"/>
    <property type="evidence" value="ECO:0000250"/>
    <property type="project" value="UniProtKB"/>
</dbReference>
<dbReference type="GO" id="GO:0009636">
    <property type="term" value="P:response to toxic substance"/>
    <property type="evidence" value="ECO:0007669"/>
    <property type="project" value="UniProtKB-KW"/>
</dbReference>
<dbReference type="Gene3D" id="3.40.50.1820">
    <property type="entry name" value="alpha/beta hydrolase"/>
    <property type="match status" value="1"/>
</dbReference>
<dbReference type="InterPro" id="IPR000073">
    <property type="entry name" value="AB_hydrolase_1"/>
</dbReference>
<dbReference type="InterPro" id="IPR029058">
    <property type="entry name" value="AB_hydrolase_fold"/>
</dbReference>
<dbReference type="InterPro" id="IPR000639">
    <property type="entry name" value="Epox_hydrolase-like"/>
</dbReference>
<dbReference type="PANTHER" id="PTHR43329">
    <property type="entry name" value="EPOXIDE HYDROLASE"/>
    <property type="match status" value="1"/>
</dbReference>
<dbReference type="Pfam" id="PF00561">
    <property type="entry name" value="Abhydrolase_1"/>
    <property type="match status" value="1"/>
</dbReference>
<dbReference type="PRINTS" id="PR00412">
    <property type="entry name" value="EPOXHYDRLASE"/>
</dbReference>
<dbReference type="SUPFAM" id="SSF53474">
    <property type="entry name" value="alpha/beta-Hydrolases"/>
    <property type="match status" value="1"/>
</dbReference>
<feature type="chain" id="PRO_0000438585" description="Epoxide hydrolase A">
    <location>
        <begin position="1"/>
        <end position="322"/>
    </location>
</feature>
<feature type="domain" description="AB hydrolase-1" evidence="2">
    <location>
        <begin position="27"/>
        <end position="131"/>
    </location>
</feature>
<feature type="active site" description="Nucleophile" evidence="1">
    <location>
        <position position="103"/>
    </location>
</feature>
<feature type="active site" description="Proton acceptor" evidence="1">
    <location>
        <position position="298"/>
    </location>
</feature>
<feature type="site" description="Contributes to the formation of an oxyanion binding site for the epoxide oxygen of substrate" evidence="1">
    <location>
        <position position="152"/>
    </location>
</feature>
<feature type="site" description="Contributes to the formation of an oxyanion binding site for the epoxide oxygen of substrate" evidence="1">
    <location>
        <position position="239"/>
    </location>
</feature>
<feature type="site" description="Plays an orienting role for the imidazole group of His-298" evidence="1">
    <location>
        <position position="269"/>
    </location>
</feature>
<gene>
    <name type="primary">ephA</name>
    <name type="ordered locus">Rv3617</name>
</gene>
<reference key="1">
    <citation type="journal article" date="1998" name="Nature">
        <title>Deciphering the biology of Mycobacterium tuberculosis from the complete genome sequence.</title>
        <authorList>
            <person name="Cole S.T."/>
            <person name="Brosch R."/>
            <person name="Parkhill J."/>
            <person name="Garnier T."/>
            <person name="Churcher C.M."/>
            <person name="Harris D.E."/>
            <person name="Gordon S.V."/>
            <person name="Eiglmeier K."/>
            <person name="Gas S."/>
            <person name="Barry C.E. III"/>
            <person name="Tekaia F."/>
            <person name="Badcock K."/>
            <person name="Basham D."/>
            <person name="Brown D."/>
            <person name="Chillingworth T."/>
            <person name="Connor R."/>
            <person name="Davies R.M."/>
            <person name="Devlin K."/>
            <person name="Feltwell T."/>
            <person name="Gentles S."/>
            <person name="Hamlin N."/>
            <person name="Holroyd S."/>
            <person name="Hornsby T."/>
            <person name="Jagels K."/>
            <person name="Krogh A."/>
            <person name="McLean J."/>
            <person name="Moule S."/>
            <person name="Murphy L.D."/>
            <person name="Oliver S."/>
            <person name="Osborne J."/>
            <person name="Quail M.A."/>
            <person name="Rajandream M.A."/>
            <person name="Rogers J."/>
            <person name="Rutter S."/>
            <person name="Seeger K."/>
            <person name="Skelton S."/>
            <person name="Squares S."/>
            <person name="Squares R."/>
            <person name="Sulston J.E."/>
            <person name="Taylor K."/>
            <person name="Whitehead S."/>
            <person name="Barrell B.G."/>
        </authorList>
    </citation>
    <scope>NUCLEOTIDE SEQUENCE [LARGE SCALE GENOMIC DNA]</scope>
    <source>
        <strain>ATCC 25618 / H37Rv</strain>
    </source>
</reference>
<reference key="2">
    <citation type="journal article" date="2006" name="Acta Crystallogr. F">
        <title>Cloning, expression, purification, crystallization and preliminary X-ray studies of epoxide hydrolases A and B from Mycobacterium tuberculosis.</title>
        <authorList>
            <person name="Biswal B.K."/>
            <person name="Garen G."/>
            <person name="Cherney M.M."/>
            <person name="Garen C."/>
            <person name="James M.N."/>
        </authorList>
    </citation>
    <scope>FUNCTION</scope>
</reference>
<reference key="3">
    <citation type="journal article" date="2011" name="Mol. Cell. Proteomics">
        <title>Proteogenomic analysis of Mycobacterium tuberculosis by high resolution mass spectrometry.</title>
        <authorList>
            <person name="Kelkar D.S."/>
            <person name="Kumar D."/>
            <person name="Kumar P."/>
            <person name="Balakrishnan L."/>
            <person name="Muthusamy B."/>
            <person name="Yadav A.K."/>
            <person name="Shrivastava P."/>
            <person name="Marimuthu A."/>
            <person name="Anand S."/>
            <person name="Sundaram H."/>
            <person name="Kingsbury R."/>
            <person name="Harsha H.C."/>
            <person name="Nair B."/>
            <person name="Prasad T.S."/>
            <person name="Chauhan D.S."/>
            <person name="Katoch K."/>
            <person name="Katoch V.M."/>
            <person name="Kumar P."/>
            <person name="Chaerkady R."/>
            <person name="Ramachandran S."/>
            <person name="Dash D."/>
            <person name="Pandey A."/>
        </authorList>
    </citation>
    <scope>IDENTIFICATION BY MASS SPECTROMETRY [LARGE SCALE ANALYSIS]</scope>
    <source>
        <strain>ATCC 25618 / H37Rv</strain>
    </source>
</reference>
<evidence type="ECO:0000250" key="1">
    <source>
        <dbReference type="UniProtKB" id="P95276"/>
    </source>
</evidence>
<evidence type="ECO:0000255" key="2"/>
<evidence type="ECO:0000303" key="3">
    <source>
    </source>
</evidence>
<evidence type="ECO:0000305" key="4"/>
<evidence type="ECO:0000305" key="5">
    <source>
    </source>
</evidence>
<proteinExistence type="evidence at protein level"/>